<reference key="1">
    <citation type="journal article" date="2003" name="Nat. Genet.">
        <title>Comparative analysis of the genome sequences of Bordetella pertussis, Bordetella parapertussis and Bordetella bronchiseptica.</title>
        <authorList>
            <person name="Parkhill J."/>
            <person name="Sebaihia M."/>
            <person name="Preston A."/>
            <person name="Murphy L.D."/>
            <person name="Thomson N.R."/>
            <person name="Harris D.E."/>
            <person name="Holden M.T.G."/>
            <person name="Churcher C.M."/>
            <person name="Bentley S.D."/>
            <person name="Mungall K.L."/>
            <person name="Cerdeno-Tarraga A.-M."/>
            <person name="Temple L."/>
            <person name="James K.D."/>
            <person name="Harris B."/>
            <person name="Quail M.A."/>
            <person name="Achtman M."/>
            <person name="Atkin R."/>
            <person name="Baker S."/>
            <person name="Basham D."/>
            <person name="Bason N."/>
            <person name="Cherevach I."/>
            <person name="Chillingworth T."/>
            <person name="Collins M."/>
            <person name="Cronin A."/>
            <person name="Davis P."/>
            <person name="Doggett J."/>
            <person name="Feltwell T."/>
            <person name="Goble A."/>
            <person name="Hamlin N."/>
            <person name="Hauser H."/>
            <person name="Holroyd S."/>
            <person name="Jagels K."/>
            <person name="Leather S."/>
            <person name="Moule S."/>
            <person name="Norberczak H."/>
            <person name="O'Neil S."/>
            <person name="Ormond D."/>
            <person name="Price C."/>
            <person name="Rabbinowitsch E."/>
            <person name="Rutter S."/>
            <person name="Sanders M."/>
            <person name="Saunders D."/>
            <person name="Seeger K."/>
            <person name="Sharp S."/>
            <person name="Simmonds M."/>
            <person name="Skelton J."/>
            <person name="Squares R."/>
            <person name="Squares S."/>
            <person name="Stevens K."/>
            <person name="Unwin L."/>
            <person name="Whitehead S."/>
            <person name="Barrell B.G."/>
            <person name="Maskell D.J."/>
        </authorList>
    </citation>
    <scope>NUCLEOTIDE SEQUENCE [LARGE SCALE GENOMIC DNA]</scope>
    <source>
        <strain>12822 / ATCC BAA-587 / NCTC 13253</strain>
    </source>
</reference>
<proteinExistence type="inferred from homology"/>
<keyword id="KW-0067">ATP-binding</keyword>
<keyword id="KW-0963">Cytoplasm</keyword>
<keyword id="KW-0418">Kinase</keyword>
<keyword id="KW-0460">Magnesium</keyword>
<keyword id="KW-0479">Metal-binding</keyword>
<keyword id="KW-0545">Nucleotide biosynthesis</keyword>
<keyword id="KW-0547">Nucleotide-binding</keyword>
<keyword id="KW-0808">Transferase</keyword>
<gene>
    <name evidence="1" type="primary">prs</name>
    <name type="synonym">prsA</name>
    <name type="ordered locus">BPP0817</name>
</gene>
<accession>Q7W181</accession>
<sequence length="310" mass="33481">MIFTGTANTRLAVDVVNHLDMSLGKMTVGRFSDGEVMVEINENVRGKDVFVLQPTCAPTNDNLMEIMVMVDALRRASAGRITAAIPYFGYARQDRRPRSARVAISAKVVANMLQVAGVDRVLTMDLHADQIQGFFDIPVDNIYAGPILLGDIWRRNFSNLVVVSPDIGGVVRARALAKQLEADLAIIDKRRPRANVSEVMNIIGEVDGRTCIIMDDMVDTAGTLCKAAQALKDRGAGAVYAYCTHPVLSGGAIERIETSSLDELVVTDTIPLSEQGQACGKIRQLSCAALLGETILRISNAESVSSLFAD</sequence>
<dbReference type="EC" id="2.7.6.1" evidence="1"/>
<dbReference type="EMBL" id="BX640425">
    <property type="protein sequence ID" value="CAE40226.1"/>
    <property type="molecule type" value="Genomic_DNA"/>
</dbReference>
<dbReference type="SMR" id="Q7W181"/>
<dbReference type="KEGG" id="bpa:BPP0817"/>
<dbReference type="HOGENOM" id="CLU_033546_2_0_4"/>
<dbReference type="UniPathway" id="UPA00087">
    <property type="reaction ID" value="UER00172"/>
</dbReference>
<dbReference type="Proteomes" id="UP000001421">
    <property type="component" value="Chromosome"/>
</dbReference>
<dbReference type="GO" id="GO:0005737">
    <property type="term" value="C:cytoplasm"/>
    <property type="evidence" value="ECO:0007669"/>
    <property type="project" value="UniProtKB-SubCell"/>
</dbReference>
<dbReference type="GO" id="GO:0002189">
    <property type="term" value="C:ribose phosphate diphosphokinase complex"/>
    <property type="evidence" value="ECO:0007669"/>
    <property type="project" value="TreeGrafter"/>
</dbReference>
<dbReference type="GO" id="GO:0005524">
    <property type="term" value="F:ATP binding"/>
    <property type="evidence" value="ECO:0007669"/>
    <property type="project" value="UniProtKB-KW"/>
</dbReference>
<dbReference type="GO" id="GO:0016301">
    <property type="term" value="F:kinase activity"/>
    <property type="evidence" value="ECO:0007669"/>
    <property type="project" value="UniProtKB-KW"/>
</dbReference>
<dbReference type="GO" id="GO:0000287">
    <property type="term" value="F:magnesium ion binding"/>
    <property type="evidence" value="ECO:0007669"/>
    <property type="project" value="UniProtKB-UniRule"/>
</dbReference>
<dbReference type="GO" id="GO:0004749">
    <property type="term" value="F:ribose phosphate diphosphokinase activity"/>
    <property type="evidence" value="ECO:0007669"/>
    <property type="project" value="UniProtKB-UniRule"/>
</dbReference>
<dbReference type="GO" id="GO:0006015">
    <property type="term" value="P:5-phosphoribose 1-diphosphate biosynthetic process"/>
    <property type="evidence" value="ECO:0007669"/>
    <property type="project" value="UniProtKB-UniRule"/>
</dbReference>
<dbReference type="GO" id="GO:0006164">
    <property type="term" value="P:purine nucleotide biosynthetic process"/>
    <property type="evidence" value="ECO:0007669"/>
    <property type="project" value="TreeGrafter"/>
</dbReference>
<dbReference type="GO" id="GO:0009156">
    <property type="term" value="P:ribonucleoside monophosphate biosynthetic process"/>
    <property type="evidence" value="ECO:0007669"/>
    <property type="project" value="InterPro"/>
</dbReference>
<dbReference type="CDD" id="cd06223">
    <property type="entry name" value="PRTases_typeI"/>
    <property type="match status" value="1"/>
</dbReference>
<dbReference type="FunFam" id="3.40.50.2020:FF:000001">
    <property type="entry name" value="Ribose-phosphate pyrophosphokinase"/>
    <property type="match status" value="1"/>
</dbReference>
<dbReference type="Gene3D" id="3.40.50.2020">
    <property type="match status" value="2"/>
</dbReference>
<dbReference type="HAMAP" id="MF_00583_B">
    <property type="entry name" value="RibP_PPkinase_B"/>
    <property type="match status" value="1"/>
</dbReference>
<dbReference type="InterPro" id="IPR000842">
    <property type="entry name" value="PRib_PP_synth_CS"/>
</dbReference>
<dbReference type="InterPro" id="IPR029099">
    <property type="entry name" value="Pribosyltran_N"/>
</dbReference>
<dbReference type="InterPro" id="IPR000836">
    <property type="entry name" value="PRibTrfase_dom"/>
</dbReference>
<dbReference type="InterPro" id="IPR029057">
    <property type="entry name" value="PRTase-like"/>
</dbReference>
<dbReference type="InterPro" id="IPR005946">
    <property type="entry name" value="Rib-P_diPkinase"/>
</dbReference>
<dbReference type="InterPro" id="IPR037515">
    <property type="entry name" value="Rib-P_diPkinase_bac"/>
</dbReference>
<dbReference type="NCBIfam" id="NF002320">
    <property type="entry name" value="PRK01259.1"/>
    <property type="match status" value="1"/>
</dbReference>
<dbReference type="NCBIfam" id="TIGR01251">
    <property type="entry name" value="ribP_PPkin"/>
    <property type="match status" value="1"/>
</dbReference>
<dbReference type="PANTHER" id="PTHR10210">
    <property type="entry name" value="RIBOSE-PHOSPHATE DIPHOSPHOKINASE FAMILY MEMBER"/>
    <property type="match status" value="1"/>
</dbReference>
<dbReference type="PANTHER" id="PTHR10210:SF41">
    <property type="entry name" value="RIBOSE-PHOSPHATE PYROPHOSPHOKINASE 1, CHLOROPLASTIC"/>
    <property type="match status" value="1"/>
</dbReference>
<dbReference type="Pfam" id="PF14572">
    <property type="entry name" value="Pribosyl_synth"/>
    <property type="match status" value="1"/>
</dbReference>
<dbReference type="Pfam" id="PF13793">
    <property type="entry name" value="Pribosyltran_N"/>
    <property type="match status" value="1"/>
</dbReference>
<dbReference type="SMART" id="SM01400">
    <property type="entry name" value="Pribosyltran_N"/>
    <property type="match status" value="1"/>
</dbReference>
<dbReference type="SUPFAM" id="SSF53271">
    <property type="entry name" value="PRTase-like"/>
    <property type="match status" value="1"/>
</dbReference>
<dbReference type="PROSITE" id="PS00114">
    <property type="entry name" value="PRPP_SYNTHASE"/>
    <property type="match status" value="1"/>
</dbReference>
<protein>
    <recommendedName>
        <fullName evidence="1">Ribose-phosphate pyrophosphokinase</fullName>
        <shortName evidence="1">RPPK</shortName>
        <ecNumber evidence="1">2.7.6.1</ecNumber>
    </recommendedName>
    <alternativeName>
        <fullName evidence="1">5-phospho-D-ribosyl alpha-1-diphosphate synthase</fullName>
    </alternativeName>
    <alternativeName>
        <fullName evidence="1">Phosphoribosyl diphosphate synthase</fullName>
    </alternativeName>
    <alternativeName>
        <fullName evidence="1">Phosphoribosyl pyrophosphate synthase</fullName>
        <shortName evidence="1">P-Rib-PP synthase</shortName>
        <shortName evidence="1">PRPP synthase</shortName>
        <shortName evidence="1">PRPPase</shortName>
    </alternativeName>
</protein>
<organism>
    <name type="scientific">Bordetella parapertussis (strain 12822 / ATCC BAA-587 / NCTC 13253)</name>
    <dbReference type="NCBI Taxonomy" id="257311"/>
    <lineage>
        <taxon>Bacteria</taxon>
        <taxon>Pseudomonadati</taxon>
        <taxon>Pseudomonadota</taxon>
        <taxon>Betaproteobacteria</taxon>
        <taxon>Burkholderiales</taxon>
        <taxon>Alcaligenaceae</taxon>
        <taxon>Bordetella</taxon>
    </lineage>
</organism>
<name>KPRS_BORPA</name>
<feature type="chain" id="PRO_0000141113" description="Ribose-phosphate pyrophosphokinase">
    <location>
        <begin position="1"/>
        <end position="310"/>
    </location>
</feature>
<feature type="active site" evidence="1">
    <location>
        <position position="189"/>
    </location>
</feature>
<feature type="binding site" evidence="1">
    <location>
        <begin position="33"/>
        <end position="35"/>
    </location>
    <ligand>
        <name>ATP</name>
        <dbReference type="ChEBI" id="CHEBI:30616"/>
    </ligand>
</feature>
<feature type="binding site" evidence="1">
    <location>
        <begin position="92"/>
        <end position="93"/>
    </location>
    <ligand>
        <name>ATP</name>
        <dbReference type="ChEBI" id="CHEBI:30616"/>
    </ligand>
</feature>
<feature type="binding site" evidence="1">
    <location>
        <position position="127"/>
    </location>
    <ligand>
        <name>Mg(2+)</name>
        <dbReference type="ChEBI" id="CHEBI:18420"/>
        <label>1</label>
    </ligand>
</feature>
<feature type="binding site" evidence="1">
    <location>
        <position position="166"/>
    </location>
    <ligand>
        <name>Mg(2+)</name>
        <dbReference type="ChEBI" id="CHEBI:18420"/>
        <label>2</label>
    </ligand>
</feature>
<feature type="binding site" evidence="1">
    <location>
        <position position="191"/>
    </location>
    <ligand>
        <name>D-ribose 5-phosphate</name>
        <dbReference type="ChEBI" id="CHEBI:78346"/>
    </ligand>
</feature>
<feature type="binding site" evidence="1">
    <location>
        <position position="215"/>
    </location>
    <ligand>
        <name>D-ribose 5-phosphate</name>
        <dbReference type="ChEBI" id="CHEBI:78346"/>
    </ligand>
</feature>
<feature type="binding site" evidence="1">
    <location>
        <begin position="219"/>
        <end position="223"/>
    </location>
    <ligand>
        <name>D-ribose 5-phosphate</name>
        <dbReference type="ChEBI" id="CHEBI:78346"/>
    </ligand>
</feature>
<comment type="function">
    <text evidence="1">Involved in the biosynthesis of the central metabolite phospho-alpha-D-ribosyl-1-pyrophosphate (PRPP) via the transfer of pyrophosphoryl group from ATP to 1-hydroxyl of ribose-5-phosphate (Rib-5-P).</text>
</comment>
<comment type="catalytic activity">
    <reaction evidence="1">
        <text>D-ribose 5-phosphate + ATP = 5-phospho-alpha-D-ribose 1-diphosphate + AMP + H(+)</text>
        <dbReference type="Rhea" id="RHEA:15609"/>
        <dbReference type="ChEBI" id="CHEBI:15378"/>
        <dbReference type="ChEBI" id="CHEBI:30616"/>
        <dbReference type="ChEBI" id="CHEBI:58017"/>
        <dbReference type="ChEBI" id="CHEBI:78346"/>
        <dbReference type="ChEBI" id="CHEBI:456215"/>
        <dbReference type="EC" id="2.7.6.1"/>
    </reaction>
</comment>
<comment type="cofactor">
    <cofactor evidence="1">
        <name>Mg(2+)</name>
        <dbReference type="ChEBI" id="CHEBI:18420"/>
    </cofactor>
    <text evidence="1">Binds 2 Mg(2+) ions per subunit.</text>
</comment>
<comment type="pathway">
    <text evidence="1">Metabolic intermediate biosynthesis; 5-phospho-alpha-D-ribose 1-diphosphate biosynthesis; 5-phospho-alpha-D-ribose 1-diphosphate from D-ribose 5-phosphate (route I): step 1/1.</text>
</comment>
<comment type="subunit">
    <text evidence="1">Homohexamer.</text>
</comment>
<comment type="subcellular location">
    <subcellularLocation>
        <location evidence="1">Cytoplasm</location>
    </subcellularLocation>
</comment>
<comment type="similarity">
    <text evidence="1">Belongs to the ribose-phosphate pyrophosphokinase family. Class I subfamily.</text>
</comment>
<evidence type="ECO:0000255" key="1">
    <source>
        <dbReference type="HAMAP-Rule" id="MF_00583"/>
    </source>
</evidence>